<dbReference type="EMBL" id="Z74756">
    <property type="status" value="NOT_ANNOTATED_CDS"/>
    <property type="molecule type" value="Genomic_DNA"/>
</dbReference>
<dbReference type="EMBL" id="BK006948">
    <property type="protein sequence ID" value="DAA10769.1"/>
    <property type="molecule type" value="Genomic_DNA"/>
</dbReference>
<dbReference type="RefSeq" id="NP_878166.1">
    <property type="nucleotide sequence ID" value="NM_001184640.1"/>
</dbReference>
<dbReference type="BioGRID" id="37020">
    <property type="interactions" value="73"/>
</dbReference>
<dbReference type="FunCoup" id="P0C272">
    <property type="interactions" value="39"/>
</dbReference>
<dbReference type="PaxDb" id="4932-YOL013W-A"/>
<dbReference type="EnsemblFungi" id="YOL013W-A_mRNA">
    <property type="protein sequence ID" value="YOL013W-A"/>
    <property type="gene ID" value="YOL013W-A"/>
</dbReference>
<dbReference type="AGR" id="SGD:S000028811"/>
<dbReference type="SGD" id="S000028811">
    <property type="gene designation" value="YOL013W-A"/>
</dbReference>
<dbReference type="VEuPathDB" id="FungiDB:YOL013W-A"/>
<dbReference type="GeneTree" id="ENSGT00940000180652"/>
<dbReference type="HOGENOM" id="CLU_2887551_0_0_1"/>
<dbReference type="InParanoid" id="P0C272"/>
<dbReference type="OrthoDB" id="5872161at2759"/>
<dbReference type="BioCyc" id="YEAST:G3O-33910-MONOMER"/>
<dbReference type="BioGRID-ORCS" id="854147">
    <property type="hits" value="0 hits in 10 CRISPR screens"/>
</dbReference>
<dbReference type="PRO" id="PR:P0C272"/>
<dbReference type="Proteomes" id="UP000002311">
    <property type="component" value="Chromosome XV"/>
</dbReference>
<dbReference type="RNAct" id="P0C272">
    <property type="molecule type" value="protein"/>
</dbReference>
<organism>
    <name type="scientific">Saccharomyces cerevisiae (strain ATCC 204508 / S288c)</name>
    <name type="common">Baker's yeast</name>
    <dbReference type="NCBI Taxonomy" id="559292"/>
    <lineage>
        <taxon>Eukaryota</taxon>
        <taxon>Fungi</taxon>
        <taxon>Dikarya</taxon>
        <taxon>Ascomycota</taxon>
        <taxon>Saccharomycotina</taxon>
        <taxon>Saccharomycetes</taxon>
        <taxon>Saccharomycetales</taxon>
        <taxon>Saccharomycetaceae</taxon>
        <taxon>Saccharomyces</taxon>
    </lineage>
</organism>
<reference key="1">
    <citation type="journal article" date="1997" name="Nature">
        <title>The nucleotide sequence of Saccharomyces cerevisiae chromosome XV.</title>
        <authorList>
            <person name="Dujon B."/>
            <person name="Albermann K."/>
            <person name="Aldea M."/>
            <person name="Alexandraki D."/>
            <person name="Ansorge W."/>
            <person name="Arino J."/>
            <person name="Benes V."/>
            <person name="Bohn C."/>
            <person name="Bolotin-Fukuhara M."/>
            <person name="Bordonne R."/>
            <person name="Boyer J."/>
            <person name="Camasses A."/>
            <person name="Casamayor A."/>
            <person name="Casas C."/>
            <person name="Cheret G."/>
            <person name="Cziepluch C."/>
            <person name="Daignan-Fornier B."/>
            <person name="Dang V.-D."/>
            <person name="de Haan M."/>
            <person name="Delius H."/>
            <person name="Durand P."/>
            <person name="Fairhead C."/>
            <person name="Feldmann H."/>
            <person name="Gaillon L."/>
            <person name="Galisson F."/>
            <person name="Gamo F.-J."/>
            <person name="Gancedo C."/>
            <person name="Goffeau A."/>
            <person name="Goulding S.E."/>
            <person name="Grivell L.A."/>
            <person name="Habbig B."/>
            <person name="Hand N.J."/>
            <person name="Hani J."/>
            <person name="Hattenhorst U."/>
            <person name="Hebling U."/>
            <person name="Hernando Y."/>
            <person name="Herrero E."/>
            <person name="Heumann K."/>
            <person name="Hiesel R."/>
            <person name="Hilger F."/>
            <person name="Hofmann B."/>
            <person name="Hollenberg C.P."/>
            <person name="Hughes B."/>
            <person name="Jauniaux J.-C."/>
            <person name="Kalogeropoulos A."/>
            <person name="Katsoulou C."/>
            <person name="Kordes E."/>
            <person name="Lafuente M.J."/>
            <person name="Landt O."/>
            <person name="Louis E.J."/>
            <person name="Maarse A.C."/>
            <person name="Madania A."/>
            <person name="Mannhaupt G."/>
            <person name="Marck C."/>
            <person name="Martin R.P."/>
            <person name="Mewes H.-W."/>
            <person name="Michaux G."/>
            <person name="Paces V."/>
            <person name="Parle-McDermott A.G."/>
            <person name="Pearson B.M."/>
            <person name="Perrin A."/>
            <person name="Pettersson B."/>
            <person name="Poch O."/>
            <person name="Pohl T.M."/>
            <person name="Poirey R."/>
            <person name="Portetelle D."/>
            <person name="Pujol A."/>
            <person name="Purnelle B."/>
            <person name="Ramezani Rad M."/>
            <person name="Rechmann S."/>
            <person name="Schwager C."/>
            <person name="Schweizer M."/>
            <person name="Sor F."/>
            <person name="Sterky F."/>
            <person name="Tarassov I.A."/>
            <person name="Teodoru C."/>
            <person name="Tettelin H."/>
            <person name="Thierry A."/>
            <person name="Tobiasch E."/>
            <person name="Tzermia M."/>
            <person name="Uhlen M."/>
            <person name="Unseld M."/>
            <person name="Valens M."/>
            <person name="Vandenbol M."/>
            <person name="Vetter I."/>
            <person name="Vlcek C."/>
            <person name="Voet M."/>
            <person name="Volckaert G."/>
            <person name="Voss H."/>
            <person name="Wambutt R."/>
            <person name="Wedler H."/>
            <person name="Wiemann S."/>
            <person name="Winsor B."/>
            <person name="Wolfe K.H."/>
            <person name="Zollner A."/>
            <person name="Zumstein E."/>
            <person name="Kleine K."/>
        </authorList>
    </citation>
    <scope>NUCLEOTIDE SEQUENCE [LARGE SCALE GENOMIC DNA]</scope>
    <source>
        <strain>ATCC 204508 / S288c</strain>
    </source>
</reference>
<reference key="2">
    <citation type="journal article" date="2014" name="G3 (Bethesda)">
        <title>The reference genome sequence of Saccharomyces cerevisiae: Then and now.</title>
        <authorList>
            <person name="Engel S.R."/>
            <person name="Dietrich F.S."/>
            <person name="Fisk D.G."/>
            <person name="Binkley G."/>
            <person name="Balakrishnan R."/>
            <person name="Costanzo M.C."/>
            <person name="Dwight S.S."/>
            <person name="Hitz B.C."/>
            <person name="Karra K."/>
            <person name="Nash R.S."/>
            <person name="Weng S."/>
            <person name="Wong E.D."/>
            <person name="Lloyd P."/>
            <person name="Skrzypek M.S."/>
            <person name="Miyasato S.R."/>
            <person name="Simison M."/>
            <person name="Cherry J.M."/>
        </authorList>
    </citation>
    <scope>GENOME REANNOTATION</scope>
    <source>
        <strain>ATCC 204508 / S288c</strain>
    </source>
</reference>
<feature type="chain" id="PRO_0000268631" description="Uncharacterized protein YOL013W-A">
    <location>
        <begin position="1"/>
        <end position="63"/>
    </location>
</feature>
<sequence length="63" mass="7021">MMCIINSESFHGSQKRSGVWSSGMILALGDFLINRGTKHARGPGFNSQLAPFFTIEKYSVRRS</sequence>
<proteinExistence type="predicted"/>
<name>YO13A_YEAST</name>
<keyword id="KW-1185">Reference proteome</keyword>
<gene>
    <name type="ordered locus">YOL013W-A</name>
</gene>
<accession>P0C272</accession>
<accession>D6W253</accession>
<protein>
    <recommendedName>
        <fullName>Uncharacterized protein YOL013W-A</fullName>
    </recommendedName>
</protein>